<comment type="function">
    <text evidence="1">Myoactive.</text>
</comment>
<comment type="subcellular location">
    <subcellularLocation>
        <location evidence="6">Secreted</location>
    </subcellularLocation>
</comment>
<comment type="similarity">
    <text evidence="2">Belongs to the pyrokinin family.</text>
</comment>
<organism>
    <name type="scientific">Namaquaphasma ookiepense</name>
    <name type="common">Gladiator bug</name>
    <dbReference type="NCBI Taxonomy" id="409167"/>
    <lineage>
        <taxon>Eukaryota</taxon>
        <taxon>Metazoa</taxon>
        <taxon>Ecdysozoa</taxon>
        <taxon>Arthropoda</taxon>
        <taxon>Hexapoda</taxon>
        <taxon>Insecta</taxon>
        <taxon>Pterygota</taxon>
        <taxon>Neoptera</taxon>
        <taxon>Polyneoptera</taxon>
        <taxon>Mantophasmatodea</taxon>
        <taxon>Austrophasmatidae</taxon>
        <taxon>Namaquaphasma</taxon>
    </lineage>
</organism>
<feature type="peptide" id="PRO_0000420509" description="Pyrokinin-3" evidence="3">
    <location>
        <begin position="1"/>
        <end position="8"/>
    </location>
</feature>
<feature type="modified residue" description="Leucine amide" evidence="3">
    <location>
        <position position="8"/>
    </location>
</feature>
<proteinExistence type="evidence at protein level"/>
<reference evidence="5" key="1">
    <citation type="journal article" date="2012" name="Syst. Biol.">
        <title>Peptidomics-based phylogeny and biogeography of Mantophasmatodea (Hexapoda).</title>
        <authorList>
            <person name="Predel R."/>
            <person name="Neupert S."/>
            <person name="Huetteroth W."/>
            <person name="Kahnt J."/>
            <person name="Waidelich D."/>
            <person name="Roth S."/>
        </authorList>
    </citation>
    <scope>PROTEIN SEQUENCE</scope>
    <scope>AMIDATION AT LEU-8</scope>
    <source>
        <tissue evidence="3">Corpora cardiaca</tissue>
    </source>
</reference>
<dbReference type="GO" id="GO:0005576">
    <property type="term" value="C:extracellular region"/>
    <property type="evidence" value="ECO:0007669"/>
    <property type="project" value="UniProtKB-SubCell"/>
</dbReference>
<dbReference type="GO" id="GO:0007218">
    <property type="term" value="P:neuropeptide signaling pathway"/>
    <property type="evidence" value="ECO:0007669"/>
    <property type="project" value="UniProtKB-KW"/>
</dbReference>
<dbReference type="PROSITE" id="PS00539">
    <property type="entry name" value="PYROKININ"/>
    <property type="match status" value="1"/>
</dbReference>
<accession>B0M2U4</accession>
<evidence type="ECO:0000250" key="1">
    <source>
        <dbReference type="UniProtKB" id="P82619"/>
    </source>
</evidence>
<evidence type="ECO:0000255" key="2"/>
<evidence type="ECO:0000269" key="3">
    <source>
    </source>
</evidence>
<evidence type="ECO:0000303" key="4">
    <source>
    </source>
</evidence>
<evidence type="ECO:0000305" key="5"/>
<evidence type="ECO:0000305" key="6">
    <source>
    </source>
</evidence>
<sequence length="8" mass="928">DPPFSPRL</sequence>
<protein>
    <recommendedName>
        <fullName evidence="4">Pyrokinin-3</fullName>
        <shortName evidence="4">PK-3</shortName>
    </recommendedName>
    <alternativeName>
        <fullName evidence="1">FXPRL-amide</fullName>
    </alternativeName>
</protein>
<name>PPK3_NAMOO</name>
<keyword id="KW-0027">Amidation</keyword>
<keyword id="KW-0903">Direct protein sequencing</keyword>
<keyword id="KW-0527">Neuropeptide</keyword>
<keyword id="KW-0964">Secreted</keyword>